<evidence type="ECO:0000255" key="1">
    <source>
        <dbReference type="HAMAP-Rule" id="MF_00321"/>
    </source>
</evidence>
<reference key="1">
    <citation type="submission" date="2008-10" db="EMBL/GenBank/DDBJ databases">
        <title>The complete genome sequence of Helicobacter pylori strain P12.</title>
        <authorList>
            <person name="Fischer W."/>
            <person name="Windhager L."/>
            <person name="Karnholz A."/>
            <person name="Zeiller M."/>
            <person name="Zimmer R."/>
            <person name="Haas R."/>
        </authorList>
    </citation>
    <scope>NUCLEOTIDE SEQUENCE [LARGE SCALE GENOMIC DNA]</scope>
    <source>
        <strain>P12</strain>
    </source>
</reference>
<keyword id="KW-0131">Cell cycle</keyword>
<keyword id="KW-0132">Cell division</keyword>
<keyword id="KW-0342">GTP-binding</keyword>
<keyword id="KW-0460">Magnesium</keyword>
<keyword id="KW-0479">Metal-binding</keyword>
<keyword id="KW-0547">Nucleotide-binding</keyword>
<keyword id="KW-0717">Septation</keyword>
<feature type="chain" id="PRO_1000115978" description="Probable GTP-binding protein EngB">
    <location>
        <begin position="1"/>
        <end position="208"/>
    </location>
</feature>
<feature type="domain" description="EngB-type G" evidence="1">
    <location>
        <begin position="23"/>
        <end position="205"/>
    </location>
</feature>
<feature type="binding site" evidence="1">
    <location>
        <begin position="31"/>
        <end position="38"/>
    </location>
    <ligand>
        <name>GTP</name>
        <dbReference type="ChEBI" id="CHEBI:37565"/>
    </ligand>
</feature>
<feature type="binding site" evidence="1">
    <location>
        <position position="38"/>
    </location>
    <ligand>
        <name>Mg(2+)</name>
        <dbReference type="ChEBI" id="CHEBI:18420"/>
    </ligand>
</feature>
<feature type="binding site" evidence="1">
    <location>
        <begin position="57"/>
        <end position="61"/>
    </location>
    <ligand>
        <name>GTP</name>
        <dbReference type="ChEBI" id="CHEBI:37565"/>
    </ligand>
</feature>
<feature type="binding site" evidence="1">
    <location>
        <position position="59"/>
    </location>
    <ligand>
        <name>Mg(2+)</name>
        <dbReference type="ChEBI" id="CHEBI:18420"/>
    </ligand>
</feature>
<feature type="binding site" evidence="1">
    <location>
        <begin position="84"/>
        <end position="87"/>
    </location>
    <ligand>
        <name>GTP</name>
        <dbReference type="ChEBI" id="CHEBI:37565"/>
    </ligand>
</feature>
<feature type="binding site" evidence="1">
    <location>
        <begin position="154"/>
        <end position="157"/>
    </location>
    <ligand>
        <name>GTP</name>
        <dbReference type="ChEBI" id="CHEBI:37565"/>
    </ligand>
</feature>
<feature type="binding site" evidence="1">
    <location>
        <begin position="182"/>
        <end position="184"/>
    </location>
    <ligand>
        <name>GTP</name>
        <dbReference type="ChEBI" id="CHEBI:37565"/>
    </ligand>
</feature>
<proteinExistence type="inferred from homology"/>
<organism>
    <name type="scientific">Helicobacter pylori (strain P12)</name>
    <dbReference type="NCBI Taxonomy" id="570508"/>
    <lineage>
        <taxon>Bacteria</taxon>
        <taxon>Pseudomonadati</taxon>
        <taxon>Campylobacterota</taxon>
        <taxon>Epsilonproteobacteria</taxon>
        <taxon>Campylobacterales</taxon>
        <taxon>Helicobacteraceae</taxon>
        <taxon>Helicobacter</taxon>
    </lineage>
</organism>
<name>ENGB_HELP2</name>
<sequence>MIAIKDAHFLTSSSQLFQCPASLTSEMVILGRSNVGKSSFINTLLGKNLAKSSATPGKTRLANFFSTTWEDKENALRATFNVIDLPGFGYAKVSKSLKKEWEGFLWELLSVRTSIKLFIHLVDARHLDLEIDKNAKENIQALLRPDQAYLSLFTKFDKLNKNEQHRLFLNAPKPFLINTTHFNALSSKYPTLEIVRQTLLKYLLTNPS</sequence>
<protein>
    <recommendedName>
        <fullName evidence="1">Probable GTP-binding protein EngB</fullName>
    </recommendedName>
</protein>
<comment type="function">
    <text evidence="1">Necessary for normal cell division and for the maintenance of normal septation.</text>
</comment>
<comment type="cofactor">
    <cofactor evidence="1">
        <name>Mg(2+)</name>
        <dbReference type="ChEBI" id="CHEBI:18420"/>
    </cofactor>
</comment>
<comment type="similarity">
    <text evidence="1">Belongs to the TRAFAC class TrmE-Era-EngA-EngB-Septin-like GTPase superfamily. EngB GTPase family.</text>
</comment>
<dbReference type="EMBL" id="CP001217">
    <property type="protein sequence ID" value="ACJ08704.1"/>
    <property type="molecule type" value="Genomic_DNA"/>
</dbReference>
<dbReference type="SMR" id="B6JP76"/>
<dbReference type="KEGG" id="hpp:HPP12_1558"/>
<dbReference type="HOGENOM" id="CLU_033732_3_2_7"/>
<dbReference type="Proteomes" id="UP000008198">
    <property type="component" value="Chromosome"/>
</dbReference>
<dbReference type="GO" id="GO:0005829">
    <property type="term" value="C:cytosol"/>
    <property type="evidence" value="ECO:0007669"/>
    <property type="project" value="TreeGrafter"/>
</dbReference>
<dbReference type="GO" id="GO:0005525">
    <property type="term" value="F:GTP binding"/>
    <property type="evidence" value="ECO:0007669"/>
    <property type="project" value="UniProtKB-UniRule"/>
</dbReference>
<dbReference type="GO" id="GO:0046872">
    <property type="term" value="F:metal ion binding"/>
    <property type="evidence" value="ECO:0007669"/>
    <property type="project" value="UniProtKB-KW"/>
</dbReference>
<dbReference type="GO" id="GO:0000917">
    <property type="term" value="P:division septum assembly"/>
    <property type="evidence" value="ECO:0007669"/>
    <property type="project" value="UniProtKB-KW"/>
</dbReference>
<dbReference type="CDD" id="cd01876">
    <property type="entry name" value="YihA_EngB"/>
    <property type="match status" value="1"/>
</dbReference>
<dbReference type="FunFam" id="3.40.50.300:FF:002409">
    <property type="entry name" value="Probable GTP-binding protein EngB"/>
    <property type="match status" value="1"/>
</dbReference>
<dbReference type="Gene3D" id="3.40.50.300">
    <property type="entry name" value="P-loop containing nucleotide triphosphate hydrolases"/>
    <property type="match status" value="1"/>
</dbReference>
<dbReference type="HAMAP" id="MF_00321">
    <property type="entry name" value="GTPase_EngB"/>
    <property type="match status" value="1"/>
</dbReference>
<dbReference type="InterPro" id="IPR030393">
    <property type="entry name" value="G_ENGB_dom"/>
</dbReference>
<dbReference type="InterPro" id="IPR006073">
    <property type="entry name" value="GTP-bd"/>
</dbReference>
<dbReference type="InterPro" id="IPR019987">
    <property type="entry name" value="GTP-bd_ribosome_bio_YsxC"/>
</dbReference>
<dbReference type="InterPro" id="IPR027417">
    <property type="entry name" value="P-loop_NTPase"/>
</dbReference>
<dbReference type="NCBIfam" id="TIGR03598">
    <property type="entry name" value="GTPase_YsxC"/>
    <property type="match status" value="1"/>
</dbReference>
<dbReference type="PANTHER" id="PTHR11649:SF13">
    <property type="entry name" value="ENGB-TYPE G DOMAIN-CONTAINING PROTEIN"/>
    <property type="match status" value="1"/>
</dbReference>
<dbReference type="PANTHER" id="PTHR11649">
    <property type="entry name" value="MSS1/TRME-RELATED GTP-BINDING PROTEIN"/>
    <property type="match status" value="1"/>
</dbReference>
<dbReference type="Pfam" id="PF01926">
    <property type="entry name" value="MMR_HSR1"/>
    <property type="match status" value="1"/>
</dbReference>
<dbReference type="SUPFAM" id="SSF52540">
    <property type="entry name" value="P-loop containing nucleoside triphosphate hydrolases"/>
    <property type="match status" value="1"/>
</dbReference>
<dbReference type="PROSITE" id="PS51706">
    <property type="entry name" value="G_ENGB"/>
    <property type="match status" value="1"/>
</dbReference>
<accession>B6JP76</accession>
<gene>
    <name evidence="1" type="primary">engB</name>
    <name type="ordered locus">HPP12_1558</name>
</gene>